<gene>
    <name type="primary">bfrD</name>
    <name type="synonym">vir90</name>
    <name type="ordered locus">BP0856</name>
</gene>
<keyword id="KW-0998">Cell outer membrane</keyword>
<keyword id="KW-0903">Direct protein sequencing</keyword>
<keyword id="KW-0406">Ion transport</keyword>
<keyword id="KW-0408">Iron</keyword>
<keyword id="KW-0410">Iron transport</keyword>
<keyword id="KW-0472">Membrane</keyword>
<keyword id="KW-0675">Receptor</keyword>
<keyword id="KW-1185">Reference proteome</keyword>
<keyword id="KW-0732">Signal</keyword>
<keyword id="KW-0798">TonB box</keyword>
<keyword id="KW-0812">Transmembrane</keyword>
<keyword id="KW-1134">Transmembrane beta strand</keyword>
<keyword id="KW-0813">Transport</keyword>
<keyword id="KW-0843">Virulence</keyword>
<sequence>MKFYSSHPMPESLAAAIAVPLLGLLPAAQAASTAVQLPSVTVEGEYSSYQPESAQSPKFTAPLADTPRTVQVIPERLIQDQGASDLEAVLRNAPGISMTAGEGGRPASDLPFIRGQNSASSLFVDGLRDPSTQSRDTFNLEQVDVVKGPDSVFSGRGGAGGSINLVTKTPRNQDFTEVQAGIGTAETYRGTIDGNWVLGENTALRLNLLGTRDTVPGRDKAVEFSRVGIAPSLRLGLSGPTRVTLGLYHYRHRRVPDYSIPYDPRTGTPITETIGVSRRNFYGLVRRDSGDTEDYAATVKWEHDLANGFKVENLARYSRATVEQITTMPELKTADLAKGLVYRNLRASYQVNDSFANRTDLRGTFDTGQWRHTFDLGGEFATSRRSRDRYKQEIPDAASPCSPVTDGNNPALCASLRDPDPHVDFPGTVRRNHNPARYHTDILSLYGFDTIAFDEQWQLNLGLRWDHYKTSGRNLPVRGAKPPVYERAARTDNLFNYQLGLVYKPRPDGSVYASYGTASTPSAVSDYAPADSISGTSQQLKPERSEAIEIGTKWQVLDRRLLVTGAMFRETRKNTSIEVAEGLRAPAGKSRVTGMELGVAGSLTPRWDVYGGYALLDSKLVRASHKSGAQGQPLPSAPRHAFSIWSTYKLLPELTVGAGAFYRSKVYGNADAGYNKDGTPKARWVPAYWRFDAMAAYQLNKHLTAQLNVYNLLDKTYYAKTYRSHYAALGPGRSAMLTFKLSY</sequence>
<dbReference type="EMBL" id="BX640413">
    <property type="protein sequence ID" value="CAE41159.1"/>
    <property type="molecule type" value="Genomic_DNA"/>
</dbReference>
<dbReference type="RefSeq" id="NP_879666.1">
    <property type="nucleotide sequence ID" value="NC_002929.2"/>
</dbReference>
<dbReference type="RefSeq" id="WP_010930039.1">
    <property type="nucleotide sequence ID" value="NZ_CP039022.1"/>
</dbReference>
<dbReference type="SMR" id="P81549"/>
<dbReference type="STRING" id="257313.BP0856"/>
<dbReference type="TCDB" id="1.B.14.1.16">
    <property type="family name" value="the outer membrane receptor (omr) family"/>
</dbReference>
<dbReference type="PaxDb" id="257313-BP0856"/>
<dbReference type="KEGG" id="bpe:BP0856"/>
<dbReference type="PATRIC" id="fig|257313.5.peg.911"/>
<dbReference type="eggNOG" id="COG4774">
    <property type="taxonomic scope" value="Bacteria"/>
</dbReference>
<dbReference type="HOGENOM" id="CLU_008287_9_1_4"/>
<dbReference type="Proteomes" id="UP000002676">
    <property type="component" value="Chromosome"/>
</dbReference>
<dbReference type="GO" id="GO:0009279">
    <property type="term" value="C:cell outer membrane"/>
    <property type="evidence" value="ECO:0007669"/>
    <property type="project" value="UniProtKB-SubCell"/>
</dbReference>
<dbReference type="GO" id="GO:0015344">
    <property type="term" value="F:siderophore uptake transmembrane transporter activity"/>
    <property type="evidence" value="ECO:0007669"/>
    <property type="project" value="TreeGrafter"/>
</dbReference>
<dbReference type="GO" id="GO:0038023">
    <property type="term" value="F:signaling receptor activity"/>
    <property type="evidence" value="ECO:0007669"/>
    <property type="project" value="InterPro"/>
</dbReference>
<dbReference type="CDD" id="cd01347">
    <property type="entry name" value="ligand_gated_channel"/>
    <property type="match status" value="1"/>
</dbReference>
<dbReference type="FunFam" id="2.170.130.10:FF:000001">
    <property type="entry name" value="Catecholate siderophore TonB-dependent receptor"/>
    <property type="match status" value="1"/>
</dbReference>
<dbReference type="Gene3D" id="2.40.170.20">
    <property type="entry name" value="TonB-dependent receptor, beta-barrel domain"/>
    <property type="match status" value="1"/>
</dbReference>
<dbReference type="Gene3D" id="2.170.130.10">
    <property type="entry name" value="TonB-dependent receptor, plug domain"/>
    <property type="match status" value="1"/>
</dbReference>
<dbReference type="InterPro" id="IPR012910">
    <property type="entry name" value="Plug_dom"/>
</dbReference>
<dbReference type="InterPro" id="IPR037066">
    <property type="entry name" value="Plug_dom_sf"/>
</dbReference>
<dbReference type="InterPro" id="IPR039426">
    <property type="entry name" value="TonB-dep_rcpt-like"/>
</dbReference>
<dbReference type="InterPro" id="IPR000531">
    <property type="entry name" value="TonB-dep_rcpt_b-brl"/>
</dbReference>
<dbReference type="InterPro" id="IPR036942">
    <property type="entry name" value="TonB_rcpt_b-brl_sf"/>
</dbReference>
<dbReference type="InterPro" id="IPR010105">
    <property type="entry name" value="TonB_sidphr_rcpt"/>
</dbReference>
<dbReference type="NCBIfam" id="TIGR01783">
    <property type="entry name" value="TonB-siderophor"/>
    <property type="match status" value="1"/>
</dbReference>
<dbReference type="PANTHER" id="PTHR32552:SF83">
    <property type="entry name" value="BLR3904 PROTEIN"/>
    <property type="match status" value="1"/>
</dbReference>
<dbReference type="PANTHER" id="PTHR32552">
    <property type="entry name" value="FERRICHROME IRON RECEPTOR-RELATED"/>
    <property type="match status" value="1"/>
</dbReference>
<dbReference type="Pfam" id="PF07715">
    <property type="entry name" value="Plug"/>
    <property type="match status" value="1"/>
</dbReference>
<dbReference type="Pfam" id="PF00593">
    <property type="entry name" value="TonB_dep_Rec_b-barrel"/>
    <property type="match status" value="1"/>
</dbReference>
<dbReference type="SUPFAM" id="SSF56935">
    <property type="entry name" value="Porins"/>
    <property type="match status" value="1"/>
</dbReference>
<dbReference type="PROSITE" id="PS52016">
    <property type="entry name" value="TONB_DEPENDENT_REC_3"/>
    <property type="match status" value="1"/>
</dbReference>
<protein>
    <recommendedName>
        <fullName>Probable TonB-dependent receptor BfrD</fullName>
    </recommendedName>
    <alternativeName>
        <fullName>Virulence-associated outer membrane protein Vir-90</fullName>
    </alternativeName>
</protein>
<comment type="function">
    <text>Probably involved in iron transport.</text>
</comment>
<comment type="subcellular location">
    <subcellularLocation>
        <location evidence="1">Cell outer membrane</location>
        <topology evidence="1">Multi-pass membrane protein</topology>
    </subcellularLocation>
</comment>
<comment type="similarity">
    <text evidence="3">Belongs to the TonB-dependent receptor family.</text>
</comment>
<proteinExistence type="evidence at protein level"/>
<reference key="1">
    <citation type="journal article" date="2003" name="Nat. Genet.">
        <title>Comparative analysis of the genome sequences of Bordetella pertussis, Bordetella parapertussis and Bordetella bronchiseptica.</title>
        <authorList>
            <person name="Parkhill J."/>
            <person name="Sebaihia M."/>
            <person name="Preston A."/>
            <person name="Murphy L.D."/>
            <person name="Thomson N.R."/>
            <person name="Harris D.E."/>
            <person name="Holden M.T.G."/>
            <person name="Churcher C.M."/>
            <person name="Bentley S.D."/>
            <person name="Mungall K.L."/>
            <person name="Cerdeno-Tarraga A.-M."/>
            <person name="Temple L."/>
            <person name="James K.D."/>
            <person name="Harris B."/>
            <person name="Quail M.A."/>
            <person name="Achtman M."/>
            <person name="Atkin R."/>
            <person name="Baker S."/>
            <person name="Basham D."/>
            <person name="Bason N."/>
            <person name="Cherevach I."/>
            <person name="Chillingworth T."/>
            <person name="Collins M."/>
            <person name="Cronin A."/>
            <person name="Davis P."/>
            <person name="Doggett J."/>
            <person name="Feltwell T."/>
            <person name="Goble A."/>
            <person name="Hamlin N."/>
            <person name="Hauser H."/>
            <person name="Holroyd S."/>
            <person name="Jagels K."/>
            <person name="Leather S."/>
            <person name="Moule S."/>
            <person name="Norberczak H."/>
            <person name="O'Neil S."/>
            <person name="Ormond D."/>
            <person name="Price C."/>
            <person name="Rabbinowitsch E."/>
            <person name="Rutter S."/>
            <person name="Sanders M."/>
            <person name="Saunders D."/>
            <person name="Seeger K."/>
            <person name="Sharp S."/>
            <person name="Simmonds M."/>
            <person name="Skelton J."/>
            <person name="Squares R."/>
            <person name="Squares S."/>
            <person name="Stevens K."/>
            <person name="Unwin L."/>
            <person name="Whitehead S."/>
            <person name="Barrell B.G."/>
            <person name="Maskell D.J."/>
        </authorList>
    </citation>
    <scope>NUCLEOTIDE SEQUENCE [LARGE SCALE GENOMIC DNA]</scope>
    <source>
        <strain>Tohama I / ATCC BAA-589 / NCTC 13251</strain>
    </source>
</reference>
<reference key="2">
    <citation type="journal article" date="1999" name="FEMS Microbiol. Lett.">
        <title>Identification of Bordetella pertussis virulence-associated outer membrane proteins.</title>
        <authorList>
            <person name="Passerini de Rossi B.N."/>
            <person name="Friedman L.E."/>
            <person name="Gonzalez Flecha F.L."/>
            <person name="Castello P.R."/>
            <person name="Franco M.A."/>
            <person name="Rossi J.P.F.C."/>
        </authorList>
    </citation>
    <scope>PROTEIN SEQUENCE OF 31-50</scope>
    <source>
        <strain>Tohama I / ATCC BAA-589 / NCTC 13251</strain>
    </source>
</reference>
<organism>
    <name type="scientific">Bordetella pertussis (strain Tohama I / ATCC BAA-589 / NCTC 13251)</name>
    <dbReference type="NCBI Taxonomy" id="257313"/>
    <lineage>
        <taxon>Bacteria</taxon>
        <taxon>Pseudomonadati</taxon>
        <taxon>Pseudomonadota</taxon>
        <taxon>Betaproteobacteria</taxon>
        <taxon>Burkholderiales</taxon>
        <taxon>Alcaligenaceae</taxon>
        <taxon>Bordetella</taxon>
    </lineage>
</organism>
<feature type="signal peptide" evidence="2">
    <location>
        <begin position="1"/>
        <end position="30"/>
    </location>
</feature>
<feature type="chain" id="PRO_0000034743" description="Probable TonB-dependent receptor BfrD">
    <location>
        <begin position="31"/>
        <end position="743"/>
    </location>
</feature>
<feature type="domain" description="TBDR plug" evidence="1">
    <location>
        <begin position="62"/>
        <end position="168"/>
    </location>
</feature>
<feature type="domain" description="TBDR beta-barrel" evidence="1">
    <location>
        <begin position="173"/>
        <end position="743"/>
    </location>
</feature>
<feature type="short sequence motif" description="TonB C-terminal box">
    <location>
        <begin position="726"/>
        <end position="743"/>
    </location>
</feature>
<accession>P81549</accession>
<name>BFRD_BORPE</name>
<evidence type="ECO:0000255" key="1">
    <source>
        <dbReference type="PROSITE-ProRule" id="PRU01360"/>
    </source>
</evidence>
<evidence type="ECO:0000269" key="2">
    <source>
    </source>
</evidence>
<evidence type="ECO:0000305" key="3"/>